<name>YCF22_ANTSP</name>
<accession>P46315</accession>
<feature type="chain" id="PRO_0000217334" description="Uncharacterized protein ycf22">
    <location>
        <begin position="1"/>
        <end position="198"/>
    </location>
</feature>
<comment type="subcellular location">
    <subcellularLocation>
        <location>Plastid</location>
        <location>Chloroplast</location>
    </subcellularLocation>
</comment>
<organism>
    <name type="scientific">Antithamnion sp.</name>
    <name type="common">Red alga</name>
    <dbReference type="NCBI Taxonomy" id="2767"/>
    <lineage>
        <taxon>Eukaryota</taxon>
        <taxon>Rhodophyta</taxon>
        <taxon>Florideophyceae</taxon>
        <taxon>Rhodymeniophycidae</taxon>
        <taxon>Ceramiales</taxon>
        <taxon>Ceramiaceae</taxon>
        <taxon>Antithamnion</taxon>
    </lineage>
</organism>
<reference key="1">
    <citation type="submission" date="1994-05" db="EMBL/GenBank/DDBJ databases">
        <authorList>
            <person name="Valentin K.-U."/>
        </authorList>
    </citation>
    <scope>NUCLEOTIDE SEQUENCE [GENOMIC DNA]</scope>
</reference>
<dbReference type="EMBL" id="Z33874">
    <property type="protein sequence ID" value="CAA83939.1"/>
    <property type="molecule type" value="Genomic_DNA"/>
</dbReference>
<dbReference type="SMR" id="P46315"/>
<dbReference type="GO" id="GO:0009507">
    <property type="term" value="C:chloroplast"/>
    <property type="evidence" value="ECO:0007669"/>
    <property type="project" value="UniProtKB-SubCell"/>
</dbReference>
<dbReference type="InterPro" id="IPR003399">
    <property type="entry name" value="Mce/MlaD"/>
</dbReference>
<dbReference type="InterPro" id="IPR039342">
    <property type="entry name" value="TGD2-like"/>
</dbReference>
<dbReference type="PANTHER" id="PTHR34675">
    <property type="entry name" value="PROTEIN TRIGALACTOSYLDIACYLGLYCEROL 2, CHLOROPLASTIC"/>
    <property type="match status" value="1"/>
</dbReference>
<dbReference type="PANTHER" id="PTHR34675:SF1">
    <property type="entry name" value="PROTEIN TRIGALACTOSYLDIACYLGLYCEROL 2, CHLOROPLASTIC"/>
    <property type="match status" value="1"/>
</dbReference>
<dbReference type="Pfam" id="PF02470">
    <property type="entry name" value="MlaD"/>
    <property type="match status" value="1"/>
</dbReference>
<proteinExistence type="predicted"/>
<geneLocation type="chloroplast"/>
<keyword id="KW-0150">Chloroplast</keyword>
<keyword id="KW-0934">Plastid</keyword>
<sequence>MHICIINSIIWFIVKYKKKHGYSLFVEFTHAYGIGEGTSVNMRGVNIGYIKNLQINSNSVLVSIYIKSEKILIPKNSIIETNQTSLFNNTIIDIIPLEKINNYSIRDFNVFNQNCYDLQIFCNNQYIIGDRGLNYDDLIRATTRIAQRFDDPRFFNLFYLFLQNTIEISDDFILTFNNISSMSYYLYIFCRDFLLNNI</sequence>
<protein>
    <recommendedName>
        <fullName>Uncharacterized protein ycf22</fullName>
    </recommendedName>
</protein>
<gene>
    <name type="primary">ycf22</name>
</gene>